<sequence length="336" mass="36252">MVPKVGINGFGRIGRVVLRNALETGAVEVVALNDPFIEPHYAEYMFKYDSTHGRFKGDIKVDGKDLVIDGKRIKFYQERDPANIPWKDSGAEYIVESTGVFTTTEKASAHFKGGAKKVIISAPSADAPMYVMGVNEDTYAGANVISNASCTTNCLAPLAKTLNDKFTIVEGLMTAIHAYTASQKTVDGPSSKDWRGGRAAAQNLIPSSTGAAKAVGKVIPELAGKVTGMSVRVPTVNVSLVDFTVRFAKDVTYDEVKAAIKEASEGPLKGILAYTEDDIVSTDILTDPHSSTFDAKAGIALNKNFVKVMSWYDNEYGYSRRVVDLIVYVSKKDAGQ</sequence>
<proteinExistence type="evidence at protein level"/>
<reference key="1">
    <citation type="journal article" date="1993" name="Biochim. Biophys. Acta">
        <title>Cloning of two isozymes of Trichoderma koningii glyceraldehyde-3-phosphate dehydrogenase with different sensitivity to koningic acid.</title>
        <authorList>
            <person name="Watanabe H."/>
            <person name="Hasumi K."/>
            <person name="Fukushima Y."/>
            <person name="Sakai K."/>
            <person name="Endo A."/>
        </authorList>
    </citation>
    <scope>NUCLEOTIDE SEQUENCE [MRNA]</scope>
    <source>
        <strain>M3947</strain>
    </source>
</reference>
<reference key="2">
    <citation type="journal article" date="1990" name="Eur. J. Biochem.">
        <title>Two glyceraldehyde-3-phosphate dehydrogenase isozymes from the koningic acid (heptelidic acid) producer Trichoderma koningii.</title>
        <authorList>
            <person name="Sakai K."/>
            <person name="Hasumi K."/>
            <person name="Endo A."/>
        </authorList>
    </citation>
    <scope>PROTEIN SEQUENCE OF 2-32</scope>
    <source>
        <strain>M3947</strain>
    </source>
</reference>
<dbReference type="EC" id="1.2.1.12"/>
<dbReference type="EMBL" id="D14519">
    <property type="protein sequence ID" value="BAA03392.1"/>
    <property type="molecule type" value="mRNA"/>
</dbReference>
<dbReference type="PIR" id="S13205">
    <property type="entry name" value="S13205"/>
</dbReference>
<dbReference type="SMR" id="P17729"/>
<dbReference type="SABIO-RK" id="P17729"/>
<dbReference type="UniPathway" id="UPA00109">
    <property type="reaction ID" value="UER00184"/>
</dbReference>
<dbReference type="GO" id="GO:0005829">
    <property type="term" value="C:cytosol"/>
    <property type="evidence" value="ECO:0007669"/>
    <property type="project" value="TreeGrafter"/>
</dbReference>
<dbReference type="GO" id="GO:0004365">
    <property type="term" value="F:glyceraldehyde-3-phosphate dehydrogenase (NAD+) (phosphorylating) activity"/>
    <property type="evidence" value="ECO:0007669"/>
    <property type="project" value="UniProtKB-EC"/>
</dbReference>
<dbReference type="GO" id="GO:0051287">
    <property type="term" value="F:NAD binding"/>
    <property type="evidence" value="ECO:0007669"/>
    <property type="project" value="InterPro"/>
</dbReference>
<dbReference type="GO" id="GO:0050661">
    <property type="term" value="F:NADP binding"/>
    <property type="evidence" value="ECO:0007669"/>
    <property type="project" value="InterPro"/>
</dbReference>
<dbReference type="GO" id="GO:0006006">
    <property type="term" value="P:glucose metabolic process"/>
    <property type="evidence" value="ECO:0007669"/>
    <property type="project" value="InterPro"/>
</dbReference>
<dbReference type="GO" id="GO:0006096">
    <property type="term" value="P:glycolytic process"/>
    <property type="evidence" value="ECO:0007669"/>
    <property type="project" value="UniProtKB-UniPathway"/>
</dbReference>
<dbReference type="CDD" id="cd18126">
    <property type="entry name" value="GAPDH_I_C"/>
    <property type="match status" value="1"/>
</dbReference>
<dbReference type="CDD" id="cd05214">
    <property type="entry name" value="GAPDH_I_N"/>
    <property type="match status" value="1"/>
</dbReference>
<dbReference type="FunFam" id="3.30.360.10:FF:000001">
    <property type="entry name" value="Glyceraldehyde-3-phosphate dehydrogenase"/>
    <property type="match status" value="1"/>
</dbReference>
<dbReference type="FunFam" id="3.40.50.720:FF:000020">
    <property type="entry name" value="Glyceraldehyde-3-phosphate dehydrogenase"/>
    <property type="match status" value="1"/>
</dbReference>
<dbReference type="Gene3D" id="3.30.360.10">
    <property type="entry name" value="Dihydrodipicolinate Reductase, domain 2"/>
    <property type="match status" value="1"/>
</dbReference>
<dbReference type="Gene3D" id="3.40.50.720">
    <property type="entry name" value="NAD(P)-binding Rossmann-like Domain"/>
    <property type="match status" value="1"/>
</dbReference>
<dbReference type="InterPro" id="IPR020831">
    <property type="entry name" value="GlycerAld/Erythrose_P_DH"/>
</dbReference>
<dbReference type="InterPro" id="IPR020830">
    <property type="entry name" value="GlycerAld_3-P_DH_AS"/>
</dbReference>
<dbReference type="InterPro" id="IPR020829">
    <property type="entry name" value="GlycerAld_3-P_DH_cat"/>
</dbReference>
<dbReference type="InterPro" id="IPR020828">
    <property type="entry name" value="GlycerAld_3-P_DH_NAD(P)-bd"/>
</dbReference>
<dbReference type="InterPro" id="IPR006424">
    <property type="entry name" value="Glyceraldehyde-3-P_DH_1"/>
</dbReference>
<dbReference type="InterPro" id="IPR036291">
    <property type="entry name" value="NAD(P)-bd_dom_sf"/>
</dbReference>
<dbReference type="NCBIfam" id="TIGR01534">
    <property type="entry name" value="GAPDH-I"/>
    <property type="match status" value="1"/>
</dbReference>
<dbReference type="PANTHER" id="PTHR10836">
    <property type="entry name" value="GLYCERALDEHYDE 3-PHOSPHATE DEHYDROGENASE"/>
    <property type="match status" value="1"/>
</dbReference>
<dbReference type="PANTHER" id="PTHR10836:SF76">
    <property type="entry name" value="GLYCERALDEHYDE-3-PHOSPHATE DEHYDROGENASE-RELATED"/>
    <property type="match status" value="1"/>
</dbReference>
<dbReference type="Pfam" id="PF02800">
    <property type="entry name" value="Gp_dh_C"/>
    <property type="match status" value="1"/>
</dbReference>
<dbReference type="Pfam" id="PF00044">
    <property type="entry name" value="Gp_dh_N"/>
    <property type="match status" value="1"/>
</dbReference>
<dbReference type="PIRSF" id="PIRSF000149">
    <property type="entry name" value="GAP_DH"/>
    <property type="match status" value="1"/>
</dbReference>
<dbReference type="PRINTS" id="PR00078">
    <property type="entry name" value="G3PDHDRGNASE"/>
</dbReference>
<dbReference type="SMART" id="SM00846">
    <property type="entry name" value="Gp_dh_N"/>
    <property type="match status" value="1"/>
</dbReference>
<dbReference type="SUPFAM" id="SSF55347">
    <property type="entry name" value="Glyceraldehyde-3-phosphate dehydrogenase-like, C-terminal domain"/>
    <property type="match status" value="1"/>
</dbReference>
<dbReference type="SUPFAM" id="SSF51735">
    <property type="entry name" value="NAD(P)-binding Rossmann-fold domains"/>
    <property type="match status" value="1"/>
</dbReference>
<dbReference type="PROSITE" id="PS00071">
    <property type="entry name" value="GAPDH"/>
    <property type="match status" value="1"/>
</dbReference>
<organism>
    <name type="scientific">Trichoderma koningii</name>
    <name type="common">Hypocrea koningii</name>
    <dbReference type="NCBI Taxonomy" id="97093"/>
    <lineage>
        <taxon>Eukaryota</taxon>
        <taxon>Fungi</taxon>
        <taxon>Dikarya</taxon>
        <taxon>Ascomycota</taxon>
        <taxon>Pezizomycotina</taxon>
        <taxon>Sordariomycetes</taxon>
        <taxon>Hypocreomycetidae</taxon>
        <taxon>Hypocreales</taxon>
        <taxon>Hypocreaceae</taxon>
        <taxon>Trichoderma</taxon>
    </lineage>
</organism>
<feature type="initiator methionine" description="Removed" evidence="3">
    <location>
        <position position="1"/>
    </location>
</feature>
<feature type="chain" id="PRO_0000145585" description="Glyceraldehyde-3-phosphate dehydrogenase 1">
    <location>
        <begin position="2"/>
        <end position="336"/>
    </location>
</feature>
<feature type="active site" description="Nucleophile" evidence="2">
    <location>
        <position position="150"/>
    </location>
</feature>
<feature type="binding site" evidence="1">
    <location>
        <begin position="12"/>
        <end position="13"/>
    </location>
    <ligand>
        <name>NAD(+)</name>
        <dbReference type="ChEBI" id="CHEBI:57540"/>
    </ligand>
</feature>
<feature type="binding site" evidence="1">
    <location>
        <position position="34"/>
    </location>
    <ligand>
        <name>NAD(+)</name>
        <dbReference type="ChEBI" id="CHEBI:57540"/>
    </ligand>
</feature>
<feature type="binding site" evidence="1">
    <location>
        <position position="79"/>
    </location>
    <ligand>
        <name>NAD(+)</name>
        <dbReference type="ChEBI" id="CHEBI:57540"/>
    </ligand>
</feature>
<feature type="binding site" evidence="1">
    <location>
        <begin position="149"/>
        <end position="151"/>
    </location>
    <ligand>
        <name>D-glyceraldehyde 3-phosphate</name>
        <dbReference type="ChEBI" id="CHEBI:59776"/>
    </ligand>
</feature>
<feature type="binding site" evidence="1">
    <location>
        <position position="180"/>
    </location>
    <ligand>
        <name>D-glyceraldehyde 3-phosphate</name>
        <dbReference type="ChEBI" id="CHEBI:59776"/>
    </ligand>
</feature>
<feature type="binding site" evidence="1">
    <location>
        <begin position="209"/>
        <end position="210"/>
    </location>
    <ligand>
        <name>D-glyceraldehyde 3-phosphate</name>
        <dbReference type="ChEBI" id="CHEBI:59776"/>
    </ligand>
</feature>
<feature type="binding site" evidence="1">
    <location>
        <position position="232"/>
    </location>
    <ligand>
        <name>D-glyceraldehyde 3-phosphate</name>
        <dbReference type="ChEBI" id="CHEBI:59776"/>
    </ligand>
</feature>
<feature type="binding site" evidence="1">
    <location>
        <position position="314"/>
    </location>
    <ligand>
        <name>NAD(+)</name>
        <dbReference type="ChEBI" id="CHEBI:57540"/>
    </ligand>
</feature>
<feature type="site" description="Activates thiol group during catalysis" evidence="1">
    <location>
        <position position="177"/>
    </location>
</feature>
<evidence type="ECO:0000250" key="1"/>
<evidence type="ECO:0000255" key="2">
    <source>
        <dbReference type="PROSITE-ProRule" id="PRU10009"/>
    </source>
</evidence>
<evidence type="ECO:0000269" key="3">
    <source>
    </source>
</evidence>
<evidence type="ECO:0000305" key="4"/>
<protein>
    <recommendedName>
        <fullName>Glyceraldehyde-3-phosphate dehydrogenase 1</fullName>
        <shortName>GAPDH1</shortName>
        <ecNumber>1.2.1.12</ecNumber>
    </recommendedName>
</protein>
<comment type="catalytic activity">
    <reaction evidence="2">
        <text>D-glyceraldehyde 3-phosphate + phosphate + NAD(+) = (2R)-3-phospho-glyceroyl phosphate + NADH + H(+)</text>
        <dbReference type="Rhea" id="RHEA:10300"/>
        <dbReference type="ChEBI" id="CHEBI:15378"/>
        <dbReference type="ChEBI" id="CHEBI:43474"/>
        <dbReference type="ChEBI" id="CHEBI:57540"/>
        <dbReference type="ChEBI" id="CHEBI:57604"/>
        <dbReference type="ChEBI" id="CHEBI:57945"/>
        <dbReference type="ChEBI" id="CHEBI:59776"/>
        <dbReference type="EC" id="1.2.1.12"/>
    </reaction>
</comment>
<comment type="activity regulation">
    <text>Inhibited by koningic acid through the interaction of cysteine residues with koningic acid even at very low concentrations.</text>
</comment>
<comment type="pathway">
    <text>Carbohydrate degradation; glycolysis; pyruvate from D-glyceraldehyde 3-phosphate: step 1/5.</text>
</comment>
<comment type="subunit">
    <text>Homotetramer.</text>
</comment>
<comment type="subcellular location">
    <subcellularLocation>
        <location>Cytoplasm</location>
    </subcellularLocation>
</comment>
<comment type="miscellaneous">
    <text>This protein is a koningic acid (antibiotic)-resistant GAPDH isozyme. It is present under antibiotic production.</text>
</comment>
<comment type="similarity">
    <text evidence="4">Belongs to the glyceraldehyde-3-phosphate dehydrogenase family.</text>
</comment>
<keyword id="KW-0963">Cytoplasm</keyword>
<keyword id="KW-0903">Direct protein sequencing</keyword>
<keyword id="KW-0324">Glycolysis</keyword>
<keyword id="KW-0520">NAD</keyword>
<keyword id="KW-0560">Oxidoreductase</keyword>
<gene>
    <name type="primary">gpd1</name>
</gene>
<accession>P17729</accession>
<name>G3P1_TRIKO</name>